<keyword id="KW-0997">Cell inner membrane</keyword>
<keyword id="KW-1003">Cell membrane</keyword>
<keyword id="KW-0285">Flavoprotein</keyword>
<keyword id="KW-0288">FMN</keyword>
<keyword id="KW-0472">Membrane</keyword>
<keyword id="KW-0560">Oxidoreductase</keyword>
<organism>
    <name type="scientific">Escherichia coli O157:H7 (strain EC4115 / EHEC)</name>
    <dbReference type="NCBI Taxonomy" id="444450"/>
    <lineage>
        <taxon>Bacteria</taxon>
        <taxon>Pseudomonadati</taxon>
        <taxon>Pseudomonadota</taxon>
        <taxon>Gammaproteobacteria</taxon>
        <taxon>Enterobacterales</taxon>
        <taxon>Enterobacteriaceae</taxon>
        <taxon>Escherichia</taxon>
    </lineage>
</organism>
<evidence type="ECO:0000255" key="1">
    <source>
        <dbReference type="HAMAP-Rule" id="MF_01559"/>
    </source>
</evidence>
<reference key="1">
    <citation type="journal article" date="2011" name="Proc. Natl. Acad. Sci. U.S.A.">
        <title>Genomic anatomy of Escherichia coli O157:H7 outbreaks.</title>
        <authorList>
            <person name="Eppinger M."/>
            <person name="Mammel M.K."/>
            <person name="Leclerc J.E."/>
            <person name="Ravel J."/>
            <person name="Cebula T.A."/>
        </authorList>
    </citation>
    <scope>NUCLEOTIDE SEQUENCE [LARGE SCALE GENOMIC DNA]</scope>
    <source>
        <strain>EC4115 / EHEC</strain>
    </source>
</reference>
<accession>B5YWA7</accession>
<sequence>MIISAASDYRAAAQRILPPFLFHYMDGGAYSEYTLRRNVEDLSEVALRQRILKNMSDLSLETTLFNEKLSMPVALAPVGLCGMYARRGEVQAAKAADAHGIPFTLSTVSVCPIEEVAPAIKRPMWFQLYVLRDRGFMRNALERAKAAGCSTLVFTVDMPTPGARYRDAHSGMSGPNAAMRRYLQAVTHPQWAWDVGLNGRPHDLGNISAYLGKPTGLEDYIGWLGNNFDPSISWKDLEWIRDFWDGPMVIKGILDPEDARDAVRFGADGIVVSNHGGRQLDGVLSSARALPAIADAVKGDIAILADSGIRNGLDVVRMIALGADTVLLGRAFLYALATAGQAGVANLLNLIEKEMKVAMTLTGAKSISEITQDSLVQGLGKELPTALAPMAKGNAA</sequence>
<gene>
    <name evidence="1" type="primary">lldD</name>
    <name type="ordered locus">ECH74115_4978</name>
</gene>
<protein>
    <recommendedName>
        <fullName evidence="1">L-lactate dehydrogenase</fullName>
        <ecNumber evidence="1">1.1.-.-</ecNumber>
    </recommendedName>
</protein>
<dbReference type="EC" id="1.1.-.-" evidence="1"/>
<dbReference type="EMBL" id="CP001164">
    <property type="protein sequence ID" value="ACI35364.1"/>
    <property type="molecule type" value="Genomic_DNA"/>
</dbReference>
<dbReference type="RefSeq" id="WP_000586964.1">
    <property type="nucleotide sequence ID" value="NC_011353.1"/>
</dbReference>
<dbReference type="SMR" id="B5YWA7"/>
<dbReference type="GeneID" id="93778319"/>
<dbReference type="KEGG" id="ecf:ECH74115_4978"/>
<dbReference type="HOGENOM" id="CLU_020639_0_0_6"/>
<dbReference type="GO" id="GO:0005886">
    <property type="term" value="C:plasma membrane"/>
    <property type="evidence" value="ECO:0007669"/>
    <property type="project" value="UniProtKB-SubCell"/>
</dbReference>
<dbReference type="GO" id="GO:0010181">
    <property type="term" value="F:FMN binding"/>
    <property type="evidence" value="ECO:0007669"/>
    <property type="project" value="InterPro"/>
</dbReference>
<dbReference type="GO" id="GO:0004459">
    <property type="term" value="F:L-lactate dehydrogenase activity"/>
    <property type="evidence" value="ECO:0007669"/>
    <property type="project" value="UniProtKB-UniRule"/>
</dbReference>
<dbReference type="GO" id="GO:0009060">
    <property type="term" value="P:aerobic respiration"/>
    <property type="evidence" value="ECO:0007669"/>
    <property type="project" value="TreeGrafter"/>
</dbReference>
<dbReference type="GO" id="GO:0006089">
    <property type="term" value="P:lactate metabolic process"/>
    <property type="evidence" value="ECO:0007669"/>
    <property type="project" value="UniProtKB-UniRule"/>
</dbReference>
<dbReference type="CDD" id="cd02809">
    <property type="entry name" value="alpha_hydroxyacid_oxid_FMN"/>
    <property type="match status" value="1"/>
</dbReference>
<dbReference type="FunFam" id="3.20.20.70:FF:000029">
    <property type="entry name" value="L-lactate dehydrogenase"/>
    <property type="match status" value="1"/>
</dbReference>
<dbReference type="Gene3D" id="3.20.20.70">
    <property type="entry name" value="Aldolase class I"/>
    <property type="match status" value="1"/>
</dbReference>
<dbReference type="HAMAP" id="MF_01559">
    <property type="entry name" value="L_lact_dehydr"/>
    <property type="match status" value="1"/>
</dbReference>
<dbReference type="InterPro" id="IPR013785">
    <property type="entry name" value="Aldolase_TIM"/>
</dbReference>
<dbReference type="InterPro" id="IPR012133">
    <property type="entry name" value="Alpha-hydoxy_acid_DH_FMN"/>
</dbReference>
<dbReference type="InterPro" id="IPR000262">
    <property type="entry name" value="FMN-dep_DH"/>
</dbReference>
<dbReference type="InterPro" id="IPR037396">
    <property type="entry name" value="FMN_HAD"/>
</dbReference>
<dbReference type="InterPro" id="IPR008259">
    <property type="entry name" value="FMN_hydac_DH_AS"/>
</dbReference>
<dbReference type="InterPro" id="IPR020920">
    <property type="entry name" value="LldD"/>
</dbReference>
<dbReference type="NCBIfam" id="NF033901">
    <property type="entry name" value="L_lactate_LldD"/>
    <property type="match status" value="1"/>
</dbReference>
<dbReference type="NCBIfam" id="NF008398">
    <property type="entry name" value="PRK11197.1"/>
    <property type="match status" value="1"/>
</dbReference>
<dbReference type="PANTHER" id="PTHR10578:SF85">
    <property type="entry name" value="L-LACTATE DEHYDROGENASE"/>
    <property type="match status" value="1"/>
</dbReference>
<dbReference type="PANTHER" id="PTHR10578">
    <property type="entry name" value="S -2-HYDROXY-ACID OXIDASE-RELATED"/>
    <property type="match status" value="1"/>
</dbReference>
<dbReference type="Pfam" id="PF01070">
    <property type="entry name" value="FMN_dh"/>
    <property type="match status" value="1"/>
</dbReference>
<dbReference type="PIRSF" id="PIRSF000138">
    <property type="entry name" value="Al-hdrx_acd_dh"/>
    <property type="match status" value="1"/>
</dbReference>
<dbReference type="SUPFAM" id="SSF51395">
    <property type="entry name" value="FMN-linked oxidoreductases"/>
    <property type="match status" value="1"/>
</dbReference>
<dbReference type="PROSITE" id="PS00557">
    <property type="entry name" value="FMN_HYDROXY_ACID_DH_1"/>
    <property type="match status" value="1"/>
</dbReference>
<dbReference type="PROSITE" id="PS51349">
    <property type="entry name" value="FMN_HYDROXY_ACID_DH_2"/>
    <property type="match status" value="1"/>
</dbReference>
<name>LLDD_ECO5E</name>
<proteinExistence type="inferred from homology"/>
<comment type="function">
    <text evidence="1">Catalyzes the conversion of L-lactate to pyruvate. Is coupled to the respiratory chain.</text>
</comment>
<comment type="catalytic activity">
    <reaction evidence="1">
        <text>(S)-lactate + A = pyruvate + AH2</text>
        <dbReference type="Rhea" id="RHEA:45816"/>
        <dbReference type="ChEBI" id="CHEBI:13193"/>
        <dbReference type="ChEBI" id="CHEBI:15361"/>
        <dbReference type="ChEBI" id="CHEBI:16651"/>
        <dbReference type="ChEBI" id="CHEBI:17499"/>
    </reaction>
</comment>
<comment type="cofactor">
    <cofactor evidence="1">
        <name>FMN</name>
        <dbReference type="ChEBI" id="CHEBI:58210"/>
    </cofactor>
</comment>
<comment type="subcellular location">
    <subcellularLocation>
        <location evidence="1">Cell inner membrane</location>
        <topology evidence="1">Peripheral membrane protein</topology>
    </subcellularLocation>
</comment>
<comment type="similarity">
    <text evidence="1">Belongs to the FMN-dependent alpha-hydroxy acid dehydrogenase family.</text>
</comment>
<feature type="chain" id="PRO_0000383425" description="L-lactate dehydrogenase">
    <location>
        <begin position="1"/>
        <end position="396"/>
    </location>
</feature>
<feature type="domain" description="FMN hydroxy acid dehydrogenase" evidence="1">
    <location>
        <begin position="1"/>
        <end position="380"/>
    </location>
</feature>
<feature type="active site" description="Proton acceptor" evidence="1">
    <location>
        <position position="275"/>
    </location>
</feature>
<feature type="binding site" evidence="1">
    <location>
        <position position="24"/>
    </location>
    <ligand>
        <name>substrate</name>
    </ligand>
</feature>
<feature type="binding site" evidence="1">
    <location>
        <position position="106"/>
    </location>
    <ligand>
        <name>FMN</name>
        <dbReference type="ChEBI" id="CHEBI:58210"/>
    </ligand>
</feature>
<feature type="binding site" evidence="1">
    <location>
        <position position="127"/>
    </location>
    <ligand>
        <name>FMN</name>
        <dbReference type="ChEBI" id="CHEBI:58210"/>
    </ligand>
</feature>
<feature type="binding site" evidence="1">
    <location>
        <position position="129"/>
    </location>
    <ligand>
        <name>substrate</name>
    </ligand>
</feature>
<feature type="binding site" evidence="1">
    <location>
        <position position="155"/>
    </location>
    <ligand>
        <name>FMN</name>
        <dbReference type="ChEBI" id="CHEBI:58210"/>
    </ligand>
</feature>
<feature type="binding site" evidence="1">
    <location>
        <position position="164"/>
    </location>
    <ligand>
        <name>substrate</name>
    </ligand>
</feature>
<feature type="binding site" evidence="1">
    <location>
        <position position="251"/>
    </location>
    <ligand>
        <name>FMN</name>
        <dbReference type="ChEBI" id="CHEBI:58210"/>
    </ligand>
</feature>
<feature type="binding site" evidence="1">
    <location>
        <position position="278"/>
    </location>
    <ligand>
        <name>substrate</name>
    </ligand>
</feature>
<feature type="binding site" evidence="1">
    <location>
        <begin position="306"/>
        <end position="330"/>
    </location>
    <ligand>
        <name>FMN</name>
        <dbReference type="ChEBI" id="CHEBI:58210"/>
    </ligand>
</feature>